<evidence type="ECO:0000255" key="1">
    <source>
        <dbReference type="HAMAP-Rule" id="MF_00270"/>
    </source>
</evidence>
<evidence type="ECO:0000305" key="2"/>
<keyword id="KW-1185">Reference proteome</keyword>
<keyword id="KW-0687">Ribonucleoprotein</keyword>
<keyword id="KW-0689">Ribosomal protein</keyword>
<keyword id="KW-0694">RNA-binding</keyword>
<keyword id="KW-0699">rRNA-binding</keyword>
<feature type="chain" id="PRO_0000345458" description="Small ribosomal subunit protein bS18">
    <location>
        <begin position="1"/>
        <end position="83"/>
    </location>
</feature>
<sequence length="83" mass="9640">MNPSPRGKKRVFHRRKYCRFCADSSLPIDYKNPKSLKSFITERGKIIPRRISGTCAKHQRAITREIKRARTIALLPYVGKPDN</sequence>
<name>RS18_DESOH</name>
<reference key="1">
    <citation type="submission" date="2007-10" db="EMBL/GenBank/DDBJ databases">
        <title>Complete sequence of Desulfococcus oleovorans Hxd3.</title>
        <authorList>
            <consortium name="US DOE Joint Genome Institute"/>
            <person name="Copeland A."/>
            <person name="Lucas S."/>
            <person name="Lapidus A."/>
            <person name="Barry K."/>
            <person name="Glavina del Rio T."/>
            <person name="Dalin E."/>
            <person name="Tice H."/>
            <person name="Pitluck S."/>
            <person name="Kiss H."/>
            <person name="Brettin T."/>
            <person name="Bruce D."/>
            <person name="Detter J.C."/>
            <person name="Han C."/>
            <person name="Schmutz J."/>
            <person name="Larimer F."/>
            <person name="Land M."/>
            <person name="Hauser L."/>
            <person name="Kyrpides N."/>
            <person name="Kim E."/>
            <person name="Wawrik B."/>
            <person name="Richardson P."/>
        </authorList>
    </citation>
    <scope>NUCLEOTIDE SEQUENCE [LARGE SCALE GENOMIC DNA]</scope>
    <source>
        <strain>DSM 6200 / JCM 39069 / Hxd3</strain>
    </source>
</reference>
<proteinExistence type="inferred from homology"/>
<protein>
    <recommendedName>
        <fullName evidence="1">Small ribosomal subunit protein bS18</fullName>
    </recommendedName>
    <alternativeName>
        <fullName evidence="2">30S ribosomal protein S18</fullName>
    </alternativeName>
</protein>
<dbReference type="EMBL" id="CP000859">
    <property type="protein sequence ID" value="ABW65819.1"/>
    <property type="molecule type" value="Genomic_DNA"/>
</dbReference>
<dbReference type="RefSeq" id="WP_012173438.1">
    <property type="nucleotide sequence ID" value="NC_009943.1"/>
</dbReference>
<dbReference type="SMR" id="A8ZRQ2"/>
<dbReference type="STRING" id="96561.Dole_0009"/>
<dbReference type="KEGG" id="dol:Dole_0009"/>
<dbReference type="eggNOG" id="COG0238">
    <property type="taxonomic scope" value="Bacteria"/>
</dbReference>
<dbReference type="HOGENOM" id="CLU_148710_2_2_7"/>
<dbReference type="OrthoDB" id="9812008at2"/>
<dbReference type="Proteomes" id="UP000008561">
    <property type="component" value="Chromosome"/>
</dbReference>
<dbReference type="GO" id="GO:0022627">
    <property type="term" value="C:cytosolic small ribosomal subunit"/>
    <property type="evidence" value="ECO:0007669"/>
    <property type="project" value="TreeGrafter"/>
</dbReference>
<dbReference type="GO" id="GO:0070181">
    <property type="term" value="F:small ribosomal subunit rRNA binding"/>
    <property type="evidence" value="ECO:0007669"/>
    <property type="project" value="TreeGrafter"/>
</dbReference>
<dbReference type="GO" id="GO:0003735">
    <property type="term" value="F:structural constituent of ribosome"/>
    <property type="evidence" value="ECO:0007669"/>
    <property type="project" value="InterPro"/>
</dbReference>
<dbReference type="GO" id="GO:0006412">
    <property type="term" value="P:translation"/>
    <property type="evidence" value="ECO:0007669"/>
    <property type="project" value="UniProtKB-UniRule"/>
</dbReference>
<dbReference type="Gene3D" id="4.10.640.10">
    <property type="entry name" value="Ribosomal protein S18"/>
    <property type="match status" value="1"/>
</dbReference>
<dbReference type="HAMAP" id="MF_00270">
    <property type="entry name" value="Ribosomal_bS18"/>
    <property type="match status" value="1"/>
</dbReference>
<dbReference type="InterPro" id="IPR001648">
    <property type="entry name" value="Ribosomal_bS18"/>
</dbReference>
<dbReference type="InterPro" id="IPR018275">
    <property type="entry name" value="Ribosomal_bS18_CS"/>
</dbReference>
<dbReference type="InterPro" id="IPR036870">
    <property type="entry name" value="Ribosomal_bS18_sf"/>
</dbReference>
<dbReference type="NCBIfam" id="TIGR00165">
    <property type="entry name" value="S18"/>
    <property type="match status" value="1"/>
</dbReference>
<dbReference type="PANTHER" id="PTHR13479">
    <property type="entry name" value="30S RIBOSOMAL PROTEIN S18"/>
    <property type="match status" value="1"/>
</dbReference>
<dbReference type="PANTHER" id="PTHR13479:SF40">
    <property type="entry name" value="SMALL RIBOSOMAL SUBUNIT PROTEIN BS18M"/>
    <property type="match status" value="1"/>
</dbReference>
<dbReference type="Pfam" id="PF01084">
    <property type="entry name" value="Ribosomal_S18"/>
    <property type="match status" value="1"/>
</dbReference>
<dbReference type="PRINTS" id="PR00974">
    <property type="entry name" value="RIBOSOMALS18"/>
</dbReference>
<dbReference type="SUPFAM" id="SSF46911">
    <property type="entry name" value="Ribosomal protein S18"/>
    <property type="match status" value="1"/>
</dbReference>
<dbReference type="PROSITE" id="PS00057">
    <property type="entry name" value="RIBOSOMAL_S18"/>
    <property type="match status" value="1"/>
</dbReference>
<accession>A8ZRQ2</accession>
<organism>
    <name type="scientific">Desulfosudis oleivorans (strain DSM 6200 / JCM 39069 / Hxd3)</name>
    <name type="common">Desulfococcus oleovorans</name>
    <dbReference type="NCBI Taxonomy" id="96561"/>
    <lineage>
        <taxon>Bacteria</taxon>
        <taxon>Pseudomonadati</taxon>
        <taxon>Thermodesulfobacteriota</taxon>
        <taxon>Desulfobacteria</taxon>
        <taxon>Desulfobacterales</taxon>
        <taxon>Desulfosudaceae</taxon>
        <taxon>Desulfosudis</taxon>
    </lineage>
</organism>
<comment type="function">
    <text evidence="1">Binds as a heterodimer with protein bS6 to the central domain of the 16S rRNA, where it helps stabilize the platform of the 30S subunit.</text>
</comment>
<comment type="subunit">
    <text evidence="1">Part of the 30S ribosomal subunit. Forms a tight heterodimer with protein bS6.</text>
</comment>
<comment type="similarity">
    <text evidence="1">Belongs to the bacterial ribosomal protein bS18 family.</text>
</comment>
<gene>
    <name evidence="1" type="primary">rpsR</name>
    <name type="ordered locus">Dole_0009</name>
</gene>